<sequence length="636" mass="68730">MSVGETTSAPPTPAPDSDVITSTFSLVDYVVFSLLLVFSLAIGLYHACRGWGKHTVGQLLLADRRMGCLPVALSLLATFQSAVAILGVPSEIYRFGTQYWFLGCCYFLGLLIPAHVFIPVFYRLHLTSAYEYLELRFNKVVRICGTVTFIFQMVIYMGVVLYAPSLALNAVTGFDLWLSVLTLGIVCTIYTALGGLKAVIWTDVFQTLVMFLGQLAVIIVGSAKVGGLGRVWDVASQHGLISGIELDPDPFVRHTFWTLAFGGVFMMLSLYGVNQAQVQRYLSSRTEKAAVLSCYAVFPCQQVALSMGCLIGLVMFAYYQEYPMSTQQSQAASDQFVLYFVMDLLKGLPGLPGLFVACLFSGSLSTISSAFNSLATVTMEDLIRPWFPECSEAQAIMLSRSLAFGYGLLCLGMAYISSQMGPVLQAAISIFGMVGGPLLGLFCLGMFFPCANPPGAIVGLLAGLIMAFWIGIGSIVTSMGSGLAPSPPNGSSFSLPSNLTIATVTTLMPSTSLSKPTGLQRLYSLSYLWYSAHNSTTVIVVGLIVSLLTGGMRGRPPNPRTIYPVLPKLLALLPLSWQKRLHCTSHCQDLPVDTELFPEKMRNGALRASGDKEPMTEASPVHQGTSPTFILHETSL</sequence>
<dbReference type="EMBL" id="AF080067">
    <property type="protein sequence ID" value="AAD37480.1"/>
    <property type="molecule type" value="mRNA"/>
</dbReference>
<dbReference type="RefSeq" id="NP_001076106.1">
    <property type="nucleotide sequence ID" value="NM_001082637.1"/>
</dbReference>
<dbReference type="SMR" id="Q9XT77"/>
<dbReference type="FunCoup" id="Q9XT77">
    <property type="interactions" value="9"/>
</dbReference>
<dbReference type="STRING" id="9986.ENSOCUP00000034162"/>
<dbReference type="GlyCosmos" id="Q9XT77">
    <property type="glycosylation" value="2 sites, No reported glycans"/>
</dbReference>
<dbReference type="PaxDb" id="9986-ENSOCUP00000014587"/>
<dbReference type="Ensembl" id="ENSOCUT00000016978.2">
    <property type="protein sequence ID" value="ENSOCUP00000014587.2"/>
    <property type="gene ID" value="ENSOCUG00000016976.3"/>
</dbReference>
<dbReference type="GeneID" id="100009326"/>
<dbReference type="KEGG" id="ocu:100009326"/>
<dbReference type="CTD" id="8884"/>
<dbReference type="eggNOG" id="KOG2349">
    <property type="taxonomic scope" value="Eukaryota"/>
</dbReference>
<dbReference type="GeneTree" id="ENSGT00940000155731"/>
<dbReference type="HOGENOM" id="CLU_018808_11_1_1"/>
<dbReference type="InParanoid" id="Q9XT77"/>
<dbReference type="OMA" id="GWWGMRR"/>
<dbReference type="OrthoDB" id="6132759at2759"/>
<dbReference type="TreeFam" id="TF316728"/>
<dbReference type="Proteomes" id="UP000001811">
    <property type="component" value="Chromosome 2"/>
</dbReference>
<dbReference type="Bgee" id="ENSOCUG00000016976">
    <property type="expression patterns" value="Expressed in adult mammalian kidney and 16 other cell types or tissues"/>
</dbReference>
<dbReference type="GO" id="GO:0016324">
    <property type="term" value="C:apical plasma membrane"/>
    <property type="evidence" value="ECO:0000250"/>
    <property type="project" value="UniProtKB"/>
</dbReference>
<dbReference type="GO" id="GO:0005886">
    <property type="term" value="C:plasma membrane"/>
    <property type="evidence" value="ECO:0000250"/>
    <property type="project" value="UniProtKB"/>
</dbReference>
<dbReference type="GO" id="GO:0015225">
    <property type="term" value="F:biotin transmembrane transporter activity"/>
    <property type="evidence" value="ECO:0000250"/>
    <property type="project" value="UniProtKB"/>
</dbReference>
<dbReference type="GO" id="GO:0015111">
    <property type="term" value="F:iodide transmembrane transporter activity"/>
    <property type="evidence" value="ECO:0000250"/>
    <property type="project" value="UniProtKB"/>
</dbReference>
<dbReference type="GO" id="GO:0015293">
    <property type="term" value="F:symporter activity"/>
    <property type="evidence" value="ECO:0007669"/>
    <property type="project" value="UniProtKB-KW"/>
</dbReference>
<dbReference type="GO" id="GO:0090482">
    <property type="term" value="F:vitamin transmembrane transporter activity"/>
    <property type="evidence" value="ECO:0000250"/>
    <property type="project" value="UniProtKB"/>
</dbReference>
<dbReference type="GO" id="GO:1905135">
    <property type="term" value="P:biotin import across plasma membrane"/>
    <property type="evidence" value="ECO:0000250"/>
    <property type="project" value="UniProtKB"/>
</dbReference>
<dbReference type="GO" id="GO:0015878">
    <property type="term" value="P:biotin transport"/>
    <property type="evidence" value="ECO:0000250"/>
    <property type="project" value="UniProtKB"/>
</dbReference>
<dbReference type="GO" id="GO:1904200">
    <property type="term" value="P:iodide transmembrane transport"/>
    <property type="evidence" value="ECO:0000250"/>
    <property type="project" value="UniProtKB"/>
</dbReference>
<dbReference type="GO" id="GO:0015887">
    <property type="term" value="P:pantothenate transmembrane transport"/>
    <property type="evidence" value="ECO:0000250"/>
    <property type="project" value="UniProtKB"/>
</dbReference>
<dbReference type="GO" id="GO:0006814">
    <property type="term" value="P:sodium ion transport"/>
    <property type="evidence" value="ECO:0007669"/>
    <property type="project" value="UniProtKB-KW"/>
</dbReference>
<dbReference type="CDD" id="cd11504">
    <property type="entry name" value="SLC5sbd_SMVT"/>
    <property type="match status" value="1"/>
</dbReference>
<dbReference type="FunFam" id="1.20.1730.10:FF:000011">
    <property type="entry name" value="sodium-dependent multivitamin transporter isoform X1"/>
    <property type="match status" value="1"/>
</dbReference>
<dbReference type="Gene3D" id="1.20.1730.10">
    <property type="entry name" value="Sodium/glucose cotransporter"/>
    <property type="match status" value="1"/>
</dbReference>
<dbReference type="InterPro" id="IPR038377">
    <property type="entry name" value="Na/Glc_symporter_sf"/>
</dbReference>
<dbReference type="InterPro" id="IPR001734">
    <property type="entry name" value="Na/solute_symporter"/>
</dbReference>
<dbReference type="InterPro" id="IPR018212">
    <property type="entry name" value="Na/solute_symporter_CS"/>
</dbReference>
<dbReference type="InterPro" id="IPR051163">
    <property type="entry name" value="Sodium:Solute_Symporter_SSF"/>
</dbReference>
<dbReference type="NCBIfam" id="TIGR00813">
    <property type="entry name" value="sss"/>
    <property type="match status" value="1"/>
</dbReference>
<dbReference type="PANTHER" id="PTHR42985">
    <property type="entry name" value="SODIUM-COUPLED MONOCARBOXYLATE TRANSPORTER"/>
    <property type="match status" value="1"/>
</dbReference>
<dbReference type="PANTHER" id="PTHR42985:SF2">
    <property type="entry name" value="SODIUM-DEPENDENT MULTIVITAMIN TRANSPORTER"/>
    <property type="match status" value="1"/>
</dbReference>
<dbReference type="Pfam" id="PF00474">
    <property type="entry name" value="SSF"/>
    <property type="match status" value="1"/>
</dbReference>
<dbReference type="PROSITE" id="PS00456">
    <property type="entry name" value="NA_SOLUT_SYMP_1"/>
    <property type="match status" value="1"/>
</dbReference>
<dbReference type="PROSITE" id="PS50283">
    <property type="entry name" value="NA_SOLUT_SYMP_3"/>
    <property type="match status" value="1"/>
</dbReference>
<reference key="1">
    <citation type="journal article" date="1999" name="Arch. Biochem. Biophys.">
        <title>Molecular and functional characterization of the intestinal Na+-dependent multivitamin transporter.</title>
        <authorList>
            <person name="Prasad P.D."/>
            <person name="Wang H."/>
            <person name="Huang W."/>
            <person name="Fei Y.-J."/>
            <person name="Leibach F.H."/>
            <person name="Devoe L.D."/>
            <person name="Ganapathy V."/>
        </authorList>
    </citation>
    <scope>NUCLEOTIDE SEQUENCE [MRNA]</scope>
    <source>
        <tissue>Intestine</tissue>
    </source>
</reference>
<organism>
    <name type="scientific">Oryctolagus cuniculus</name>
    <name type="common">Rabbit</name>
    <dbReference type="NCBI Taxonomy" id="9986"/>
    <lineage>
        <taxon>Eukaryota</taxon>
        <taxon>Metazoa</taxon>
        <taxon>Chordata</taxon>
        <taxon>Craniata</taxon>
        <taxon>Vertebrata</taxon>
        <taxon>Euteleostomi</taxon>
        <taxon>Mammalia</taxon>
        <taxon>Eutheria</taxon>
        <taxon>Euarchontoglires</taxon>
        <taxon>Glires</taxon>
        <taxon>Lagomorpha</taxon>
        <taxon>Leporidae</taxon>
        <taxon>Oryctolagus</taxon>
    </lineage>
</organism>
<proteinExistence type="evidence at transcript level"/>
<protein>
    <recommendedName>
        <fullName evidence="2">Sodium-dependent multivitamin transporter</fullName>
        <shortName evidence="2">Na(+)-dependent multivitamin transporter</shortName>
    </recommendedName>
    <alternativeName>
        <fullName evidence="2">Solute carrier family 5 member 6</fullName>
    </alternativeName>
</protein>
<comment type="function">
    <text evidence="1 2">Sodium-dependent multivitamin transporter that mediates the electrogenic transport of pantothenate, biotin, lipoate and iodide. Functions as a Na(+)-coupled substrate symporter where the stoichiometry of Na(+):substrate is 2:1, creating an electrochemical Na(+) gradient used as driving force for substrate uptake. Required for biotin and pantothenate uptake in the intestine across the brush border membrane (By similarity). Plays a role in the maintenance of intestinal mucosa integrity, by providing the gut mucosa with biotin (By similarity). Contributes to the luminal uptake of biotin and pantothenate into the brain across the blood-brain barrier (By similarity).</text>
</comment>
<comment type="catalytic activity">
    <reaction evidence="2">
        <text>biotin(out) + 2 Na(+)(out) = biotin(in) + 2 Na(+)(in)</text>
        <dbReference type="Rhea" id="RHEA:73375"/>
        <dbReference type="ChEBI" id="CHEBI:29101"/>
        <dbReference type="ChEBI" id="CHEBI:57586"/>
    </reaction>
</comment>
<comment type="catalytic activity">
    <reaction evidence="2">
        <text>(R)-pantothenate(out) + 2 Na(+)(out) = (R)-pantothenate(in) + 2 Na(+)(in)</text>
        <dbReference type="Rhea" id="RHEA:73371"/>
        <dbReference type="ChEBI" id="CHEBI:29032"/>
        <dbReference type="ChEBI" id="CHEBI:29101"/>
    </reaction>
</comment>
<comment type="catalytic activity">
    <reaction evidence="2">
        <text>(R)-lipoate(out) + 2 Na(+)(out) = (R)-lipoate(in) + 2 Na(+)(in)</text>
        <dbReference type="Rhea" id="RHEA:73379"/>
        <dbReference type="ChEBI" id="CHEBI:29101"/>
        <dbReference type="ChEBI" id="CHEBI:83088"/>
    </reaction>
</comment>
<comment type="catalytic activity">
    <reaction evidence="2">
        <text>iodide(out) + 2 Na(+)(out) = iodide(in) + 2 Na(+)(in)</text>
        <dbReference type="Rhea" id="RHEA:71207"/>
        <dbReference type="ChEBI" id="CHEBI:16382"/>
        <dbReference type="ChEBI" id="CHEBI:29101"/>
    </reaction>
</comment>
<comment type="subunit">
    <text evidence="2">Interacts with PDZD11.</text>
</comment>
<comment type="subcellular location">
    <subcellularLocation>
        <location evidence="2">Cell membrane</location>
        <topology evidence="3">Multi-pass membrane protein</topology>
    </subcellularLocation>
    <subcellularLocation>
        <location evidence="2">Apical cell membrane</location>
        <topology evidence="3">Multi-pass membrane protein</topology>
    </subcellularLocation>
</comment>
<comment type="domain">
    <text evidence="2">The C-terminal tail is important for biotin uptake as well as apical localization in polarized cells.</text>
</comment>
<comment type="similarity">
    <text evidence="5">Belongs to the sodium:solute symporter (SSF) (TC 2.A.21) family.</text>
</comment>
<evidence type="ECO:0000250" key="1">
    <source>
        <dbReference type="UniProtKB" id="Q5U4D8"/>
    </source>
</evidence>
<evidence type="ECO:0000250" key="2">
    <source>
        <dbReference type="UniProtKB" id="Q9Y289"/>
    </source>
</evidence>
<evidence type="ECO:0000255" key="3"/>
<evidence type="ECO:0000256" key="4">
    <source>
        <dbReference type="SAM" id="MobiDB-lite"/>
    </source>
</evidence>
<evidence type="ECO:0000305" key="5"/>
<accession>Q9XT77</accession>
<keyword id="KW-0092">Biotin</keyword>
<keyword id="KW-1003">Cell membrane</keyword>
<keyword id="KW-0325">Glycoprotein</keyword>
<keyword id="KW-0406">Ion transport</keyword>
<keyword id="KW-0472">Membrane</keyword>
<keyword id="KW-1185">Reference proteome</keyword>
<keyword id="KW-0915">Sodium</keyword>
<keyword id="KW-0739">Sodium transport</keyword>
<keyword id="KW-0769">Symport</keyword>
<keyword id="KW-0812">Transmembrane</keyword>
<keyword id="KW-1133">Transmembrane helix</keyword>
<keyword id="KW-0813">Transport</keyword>
<feature type="chain" id="PRO_0000105388" description="Sodium-dependent multivitamin transporter">
    <location>
        <begin position="1"/>
        <end position="636"/>
    </location>
</feature>
<feature type="transmembrane region" description="Helical" evidence="3">
    <location>
        <begin position="24"/>
        <end position="44"/>
    </location>
</feature>
<feature type="transmembrane region" description="Helical" evidence="3">
    <location>
        <begin position="68"/>
        <end position="88"/>
    </location>
</feature>
<feature type="transmembrane region" description="Helical" evidence="3">
    <location>
        <begin position="101"/>
        <end position="121"/>
    </location>
</feature>
<feature type="transmembrane region" description="Helical" evidence="3">
    <location>
        <begin position="143"/>
        <end position="163"/>
    </location>
</feature>
<feature type="transmembrane region" description="Helical" evidence="3">
    <location>
        <begin position="176"/>
        <end position="196"/>
    </location>
</feature>
<feature type="transmembrane region" description="Helical" evidence="3">
    <location>
        <begin position="199"/>
        <end position="219"/>
    </location>
</feature>
<feature type="transmembrane region" description="Helical" evidence="3">
    <location>
        <begin position="256"/>
        <end position="276"/>
    </location>
</feature>
<feature type="transmembrane region" description="Helical" evidence="3">
    <location>
        <begin position="297"/>
        <end position="317"/>
    </location>
</feature>
<feature type="transmembrane region" description="Helical" evidence="3">
    <location>
        <begin position="336"/>
        <end position="356"/>
    </location>
</feature>
<feature type="transmembrane region" description="Helical" evidence="3">
    <location>
        <begin position="404"/>
        <end position="424"/>
    </location>
</feature>
<feature type="transmembrane region" description="Helical" evidence="3">
    <location>
        <begin position="428"/>
        <end position="448"/>
    </location>
</feature>
<feature type="transmembrane region" description="Helical" evidence="3">
    <location>
        <begin position="456"/>
        <end position="476"/>
    </location>
</feature>
<feature type="transmembrane region" description="Helical" evidence="3">
    <location>
        <begin position="528"/>
        <end position="548"/>
    </location>
</feature>
<feature type="region of interest" description="Disordered" evidence="4">
    <location>
        <begin position="606"/>
        <end position="627"/>
    </location>
</feature>
<feature type="glycosylation site" description="N-linked (GlcNAc...) asparagine" evidence="3">
    <location>
        <position position="489"/>
    </location>
</feature>
<feature type="glycosylation site" description="N-linked (GlcNAc...) asparagine" evidence="3">
    <location>
        <position position="498"/>
    </location>
</feature>
<name>SC5A6_RABIT</name>
<gene>
    <name type="primary">SLC5A6</name>
    <name type="synonym">SMVT</name>
</gene>